<keyword id="KW-0025">Alternative splicing</keyword>
<keyword id="KW-0175">Coiled coil</keyword>
<keyword id="KW-0433">Leucine-rich repeat</keyword>
<keyword id="KW-1267">Proteomics identification</keyword>
<keyword id="KW-1185">Reference proteome</keyword>
<keyword id="KW-0677">Repeat</keyword>
<dbReference type="EMBL" id="AL121878">
    <property type="status" value="NOT_ANNOTATED_CDS"/>
    <property type="molecule type" value="Genomic_DNA"/>
</dbReference>
<dbReference type="EMBL" id="AL445164">
    <property type="status" value="NOT_ANNOTATED_CDS"/>
    <property type="molecule type" value="Genomic_DNA"/>
</dbReference>
<dbReference type="EMBL" id="AL589786">
    <property type="status" value="NOT_ANNOTATED_CDS"/>
    <property type="molecule type" value="Genomic_DNA"/>
</dbReference>
<dbReference type="EMBL" id="BC125224">
    <property type="protein sequence ID" value="AAI25225.1"/>
    <property type="molecule type" value="mRNA"/>
</dbReference>
<dbReference type="EMBL" id="AK022128">
    <property type="protein sequence ID" value="BAB13966.1"/>
    <property type="molecule type" value="mRNA"/>
</dbReference>
<dbReference type="EMBL" id="AB040928">
    <property type="protein sequence ID" value="BAA96019.1"/>
    <property type="status" value="ALT_INIT"/>
    <property type="molecule type" value="mRNA"/>
</dbReference>
<dbReference type="CCDS" id="CCDS48155.1">
    <molecule id="Q5VUJ6-1"/>
</dbReference>
<dbReference type="CCDS" id="CCDS59175.1">
    <molecule id="Q5VUJ6-2"/>
</dbReference>
<dbReference type="RefSeq" id="NP_001230892.1">
    <molecule id="Q5VUJ6-2"/>
    <property type="nucleotide sequence ID" value="NM_001243963.2"/>
</dbReference>
<dbReference type="RefSeq" id="NP_065922.3">
    <molecule id="Q5VUJ6-1"/>
    <property type="nucleotide sequence ID" value="NM_020871.3"/>
</dbReference>
<dbReference type="SMR" id="Q5VUJ6"/>
<dbReference type="BioGRID" id="121674">
    <property type="interactions" value="73"/>
</dbReference>
<dbReference type="FunCoup" id="Q5VUJ6">
    <property type="interactions" value="626"/>
</dbReference>
<dbReference type="IntAct" id="Q5VUJ6">
    <property type="interactions" value="49"/>
</dbReference>
<dbReference type="MINT" id="Q5VUJ6"/>
<dbReference type="STRING" id="9606.ENSP00000325091"/>
<dbReference type="GlyGen" id="Q5VUJ6">
    <property type="glycosylation" value="2 sites, 2 N-linked glycans (2 sites)"/>
</dbReference>
<dbReference type="iPTMnet" id="Q5VUJ6"/>
<dbReference type="PhosphoSitePlus" id="Q5VUJ6"/>
<dbReference type="BioMuta" id="LRCH2"/>
<dbReference type="DMDM" id="116248529"/>
<dbReference type="jPOST" id="Q5VUJ6"/>
<dbReference type="MassIVE" id="Q5VUJ6"/>
<dbReference type="PaxDb" id="9606-ENSP00000325091"/>
<dbReference type="PeptideAtlas" id="Q5VUJ6"/>
<dbReference type="ProteomicsDB" id="26063"/>
<dbReference type="ProteomicsDB" id="65420">
    <molecule id="Q5VUJ6-1"/>
</dbReference>
<dbReference type="Pumba" id="Q5VUJ6"/>
<dbReference type="Antibodypedia" id="517">
    <property type="antibodies" value="48 antibodies from 15 providers"/>
</dbReference>
<dbReference type="DNASU" id="57631"/>
<dbReference type="Ensembl" id="ENST00000317135.13">
    <molecule id="Q5VUJ6-1"/>
    <property type="protein sequence ID" value="ENSP00000325091.8"/>
    <property type="gene ID" value="ENSG00000130224.15"/>
</dbReference>
<dbReference type="Ensembl" id="ENST00000538422.2">
    <molecule id="Q5VUJ6-2"/>
    <property type="protein sequence ID" value="ENSP00000439366.1"/>
    <property type="gene ID" value="ENSG00000130224.15"/>
</dbReference>
<dbReference type="GeneID" id="57631"/>
<dbReference type="KEGG" id="hsa:57631"/>
<dbReference type="MANE-Select" id="ENST00000317135.13">
    <property type="protein sequence ID" value="ENSP00000325091.8"/>
    <property type="RefSeq nucleotide sequence ID" value="NM_020871.4"/>
    <property type="RefSeq protein sequence ID" value="NP_065922.3"/>
</dbReference>
<dbReference type="UCSC" id="uc004epz.4">
    <molecule id="Q5VUJ6-1"/>
    <property type="organism name" value="human"/>
</dbReference>
<dbReference type="AGR" id="HGNC:29292"/>
<dbReference type="CTD" id="57631"/>
<dbReference type="DisGeNET" id="57631"/>
<dbReference type="GeneCards" id="LRCH2"/>
<dbReference type="HGNC" id="HGNC:29292">
    <property type="gene designation" value="LRCH2"/>
</dbReference>
<dbReference type="HPA" id="ENSG00000130224">
    <property type="expression patterns" value="Low tissue specificity"/>
</dbReference>
<dbReference type="MalaCards" id="LRCH2"/>
<dbReference type="neXtProt" id="NX_Q5VUJ6"/>
<dbReference type="OpenTargets" id="ENSG00000130224"/>
<dbReference type="PharmGKB" id="PA134890613"/>
<dbReference type="VEuPathDB" id="HostDB:ENSG00000130224"/>
<dbReference type="eggNOG" id="KOG0532">
    <property type="taxonomic scope" value="Eukaryota"/>
</dbReference>
<dbReference type="GeneTree" id="ENSGT00940000160039"/>
<dbReference type="HOGENOM" id="CLU_008231_1_0_1"/>
<dbReference type="InParanoid" id="Q5VUJ6"/>
<dbReference type="OMA" id="TMECEKS"/>
<dbReference type="OrthoDB" id="660555at2759"/>
<dbReference type="PAN-GO" id="Q5VUJ6">
    <property type="GO annotations" value="0 GO annotations based on evolutionary models"/>
</dbReference>
<dbReference type="PhylomeDB" id="Q5VUJ6"/>
<dbReference type="TreeFam" id="TF318428"/>
<dbReference type="PathwayCommons" id="Q5VUJ6"/>
<dbReference type="SignaLink" id="Q5VUJ6"/>
<dbReference type="BioGRID-ORCS" id="57631">
    <property type="hits" value="21 hits in 769 CRISPR screens"/>
</dbReference>
<dbReference type="ChiTaRS" id="LRCH2">
    <property type="organism name" value="human"/>
</dbReference>
<dbReference type="GenomeRNAi" id="57631"/>
<dbReference type="Pharos" id="Q5VUJ6">
    <property type="development level" value="Tdark"/>
</dbReference>
<dbReference type="PRO" id="PR:Q5VUJ6"/>
<dbReference type="Proteomes" id="UP000005640">
    <property type="component" value="Chromosome X"/>
</dbReference>
<dbReference type="RNAct" id="Q5VUJ6">
    <property type="molecule type" value="protein"/>
</dbReference>
<dbReference type="Bgee" id="ENSG00000130224">
    <property type="expression patterns" value="Expressed in ganglionic eminence and 148 other cell types or tissues"/>
</dbReference>
<dbReference type="CDD" id="cd21271">
    <property type="entry name" value="CH_LRCH2"/>
    <property type="match status" value="1"/>
</dbReference>
<dbReference type="FunFam" id="1.10.418.10:FF:000021">
    <property type="entry name" value="Leucine-rich repeat and calponin homology domain-containing protein 1 isoform 3"/>
    <property type="match status" value="1"/>
</dbReference>
<dbReference type="FunFam" id="3.80.10.10:FF:000007">
    <property type="entry name" value="Leucine-rich repeat and calponin homology domain-containing protein 1 isoform 3"/>
    <property type="match status" value="1"/>
</dbReference>
<dbReference type="Gene3D" id="1.10.418.10">
    <property type="entry name" value="Calponin-like domain"/>
    <property type="match status" value="1"/>
</dbReference>
<dbReference type="Gene3D" id="3.80.10.10">
    <property type="entry name" value="Ribonuclease Inhibitor"/>
    <property type="match status" value="1"/>
</dbReference>
<dbReference type="InterPro" id="IPR001715">
    <property type="entry name" value="CH_dom"/>
</dbReference>
<dbReference type="InterPro" id="IPR036872">
    <property type="entry name" value="CH_dom_sf"/>
</dbReference>
<dbReference type="InterPro" id="IPR001611">
    <property type="entry name" value="Leu-rich_rpt"/>
</dbReference>
<dbReference type="InterPro" id="IPR003591">
    <property type="entry name" value="Leu-rich_rpt_typical-subtyp"/>
</dbReference>
<dbReference type="InterPro" id="IPR032675">
    <property type="entry name" value="LRR_dom_sf"/>
</dbReference>
<dbReference type="InterPro" id="IPR050216">
    <property type="entry name" value="LRR_domain-containing"/>
</dbReference>
<dbReference type="PANTHER" id="PTHR48051">
    <property type="match status" value="1"/>
</dbReference>
<dbReference type="PANTHER" id="PTHR48051:SF14">
    <property type="entry name" value="LEUCINE-RICH REPEAT AND CALPONIN HOMOLOGY DOMAIN-CONTAINING PROTEIN 2 ISOFORM X1"/>
    <property type="match status" value="1"/>
</dbReference>
<dbReference type="Pfam" id="PF00307">
    <property type="entry name" value="CH"/>
    <property type="match status" value="1"/>
</dbReference>
<dbReference type="Pfam" id="PF13855">
    <property type="entry name" value="LRR_8"/>
    <property type="match status" value="2"/>
</dbReference>
<dbReference type="SMART" id="SM00033">
    <property type="entry name" value="CH"/>
    <property type="match status" value="1"/>
</dbReference>
<dbReference type="SMART" id="SM00364">
    <property type="entry name" value="LRR_BAC"/>
    <property type="match status" value="4"/>
</dbReference>
<dbReference type="SMART" id="SM00369">
    <property type="entry name" value="LRR_TYP"/>
    <property type="match status" value="5"/>
</dbReference>
<dbReference type="SUPFAM" id="SSF47576">
    <property type="entry name" value="Calponin-homology domain, CH-domain"/>
    <property type="match status" value="1"/>
</dbReference>
<dbReference type="SUPFAM" id="SSF52058">
    <property type="entry name" value="L domain-like"/>
    <property type="match status" value="1"/>
</dbReference>
<dbReference type="PROSITE" id="PS50021">
    <property type="entry name" value="CH"/>
    <property type="match status" value="1"/>
</dbReference>
<dbReference type="PROSITE" id="PS51450">
    <property type="entry name" value="LRR"/>
    <property type="match status" value="8"/>
</dbReference>
<comment type="function">
    <text evidence="1 2">May play a role in the organization of the cytoskeleton.</text>
</comment>
<comment type="interaction">
    <interactant intactId="EBI-2659666">
        <id>Q5VUJ6</id>
    </interactant>
    <interactant intactId="EBI-2548605">
        <id>Q8NF50</id>
        <label>DOCK8</label>
    </interactant>
    <organismsDiffer>false</organismsDiffer>
    <experiments>5</experiments>
</comment>
<comment type="interaction">
    <interactant intactId="EBI-12287681">
        <id>Q5VUJ6-2</id>
    </interactant>
    <interactant intactId="EBI-11523345">
        <id>Q8IYF3-3</id>
        <label>TEX11</label>
    </interactant>
    <organismsDiffer>false</organismsDiffer>
    <experiments>3</experiments>
</comment>
<comment type="alternative products">
    <event type="alternative splicing"/>
    <isoform>
        <id>Q5VUJ6-1</id>
        <name>1</name>
        <sequence type="displayed"/>
    </isoform>
    <isoform>
        <id>Q5VUJ6-2</id>
        <name>2</name>
        <sequence type="described" ref="VSP_044969"/>
    </isoform>
</comment>
<comment type="sequence caution" evidence="7">
    <conflict type="erroneous initiation">
        <sequence resource="EMBL-CDS" id="BAA96019"/>
    </conflict>
</comment>
<sequence length="765" mass="84588">MAASQGGGGNSGGGGCGGGGSSGGCGTAGGGGGGAGGGGGGGGGTLVVPIPVPTLFGQPFPNGPPWNPGSLQPQHTVRSLDRALEEAGSSGILSLSGRKLRDFPGSGYDLTDTTQADLSRNRFTEIPSDVWLFAPLETLNLYHNCIKTIPEAIKNLQMLTYLNISRNLLSTLPKYLFDLPLKVLVVSNNKLVSIPEEIGKLKDLMELDISCNEIQVLPQQMGKLHSLRELNIRRNNLHVLPDELGDLPLVKLDFSCNKVTEIPVCYRKLHHLQVIILDNNPLQVPPAQICLKGKVHIFKYLNIQACCRMDKKPDSLDLPSLSKRMPSQPLTDSMEDFYPNKNHGPDSGIGSDNGEKRLSTTEPSDDDTVSLHSQVSESNREQTSRNDSHIIGSKTDSQKDQEVYDFVDPNTEDVAVPEQGNAHIGSFVSFFKGKEKCSEKSRKNEELGDEKRLEKEQLLAEEEDDDLKEVTDLRKIAAQLLQQEQKNRILNHSTSVMRNKPKQTVECEKSVSADEVNSPLSPLTWQPLENQKDQIDEQPWPESHPIIWQSEERRRSKQIRKEYFKYKSMRKSSSGNENDEQDSDNANMSTQSPVSSEEYDRTDGFSHSPFGLKPRSAFSRSSRQEYGAADPGFTMRRKMEHLREEREQIRQLRNNLESRLKVILPDDIGAALMDGVVLCHLANHIRPRSVASIHVPSPAVPKLSMAKCRRNVENFLDACKKLGVSQERLCLPHHILEERGLVKVGVTVQALLELPTTKASQLSVA</sequence>
<evidence type="ECO:0000250" key="1">
    <source>
        <dbReference type="UniProtKB" id="Q960C5"/>
    </source>
</evidence>
<evidence type="ECO:0000250" key="2">
    <source>
        <dbReference type="UniProtKB" id="Q96II8"/>
    </source>
</evidence>
<evidence type="ECO:0000255" key="3"/>
<evidence type="ECO:0000255" key="4">
    <source>
        <dbReference type="PROSITE-ProRule" id="PRU00044"/>
    </source>
</evidence>
<evidence type="ECO:0000256" key="5">
    <source>
        <dbReference type="SAM" id="MobiDB-lite"/>
    </source>
</evidence>
<evidence type="ECO:0000303" key="6">
    <source>
    </source>
</evidence>
<evidence type="ECO:0000305" key="7"/>
<reference key="1">
    <citation type="journal article" date="2005" name="Nature">
        <title>The DNA sequence of the human X chromosome.</title>
        <authorList>
            <person name="Ross M.T."/>
            <person name="Grafham D.V."/>
            <person name="Coffey A.J."/>
            <person name="Scherer S."/>
            <person name="McLay K."/>
            <person name="Muzny D."/>
            <person name="Platzer M."/>
            <person name="Howell G.R."/>
            <person name="Burrows C."/>
            <person name="Bird C.P."/>
            <person name="Frankish A."/>
            <person name="Lovell F.L."/>
            <person name="Howe K.L."/>
            <person name="Ashurst J.L."/>
            <person name="Fulton R.S."/>
            <person name="Sudbrak R."/>
            <person name="Wen G."/>
            <person name="Jones M.C."/>
            <person name="Hurles M.E."/>
            <person name="Andrews T.D."/>
            <person name="Scott C.E."/>
            <person name="Searle S."/>
            <person name="Ramser J."/>
            <person name="Whittaker A."/>
            <person name="Deadman R."/>
            <person name="Carter N.P."/>
            <person name="Hunt S.E."/>
            <person name="Chen R."/>
            <person name="Cree A."/>
            <person name="Gunaratne P."/>
            <person name="Havlak P."/>
            <person name="Hodgson A."/>
            <person name="Metzker M.L."/>
            <person name="Richards S."/>
            <person name="Scott G."/>
            <person name="Steffen D."/>
            <person name="Sodergren E."/>
            <person name="Wheeler D.A."/>
            <person name="Worley K.C."/>
            <person name="Ainscough R."/>
            <person name="Ambrose K.D."/>
            <person name="Ansari-Lari M.A."/>
            <person name="Aradhya S."/>
            <person name="Ashwell R.I."/>
            <person name="Babbage A.K."/>
            <person name="Bagguley C.L."/>
            <person name="Ballabio A."/>
            <person name="Banerjee R."/>
            <person name="Barker G.E."/>
            <person name="Barlow K.F."/>
            <person name="Barrett I.P."/>
            <person name="Bates K.N."/>
            <person name="Beare D.M."/>
            <person name="Beasley H."/>
            <person name="Beasley O."/>
            <person name="Beck A."/>
            <person name="Bethel G."/>
            <person name="Blechschmidt K."/>
            <person name="Brady N."/>
            <person name="Bray-Allen S."/>
            <person name="Bridgeman A.M."/>
            <person name="Brown A.J."/>
            <person name="Brown M.J."/>
            <person name="Bonnin D."/>
            <person name="Bruford E.A."/>
            <person name="Buhay C."/>
            <person name="Burch P."/>
            <person name="Burford D."/>
            <person name="Burgess J."/>
            <person name="Burrill W."/>
            <person name="Burton J."/>
            <person name="Bye J.M."/>
            <person name="Carder C."/>
            <person name="Carrel L."/>
            <person name="Chako J."/>
            <person name="Chapman J.C."/>
            <person name="Chavez D."/>
            <person name="Chen E."/>
            <person name="Chen G."/>
            <person name="Chen Y."/>
            <person name="Chen Z."/>
            <person name="Chinault C."/>
            <person name="Ciccodicola A."/>
            <person name="Clark S.Y."/>
            <person name="Clarke G."/>
            <person name="Clee C.M."/>
            <person name="Clegg S."/>
            <person name="Clerc-Blankenburg K."/>
            <person name="Clifford K."/>
            <person name="Cobley V."/>
            <person name="Cole C.G."/>
            <person name="Conquer J.S."/>
            <person name="Corby N."/>
            <person name="Connor R.E."/>
            <person name="David R."/>
            <person name="Davies J."/>
            <person name="Davis C."/>
            <person name="Davis J."/>
            <person name="Delgado O."/>
            <person name="Deshazo D."/>
            <person name="Dhami P."/>
            <person name="Ding Y."/>
            <person name="Dinh H."/>
            <person name="Dodsworth S."/>
            <person name="Draper H."/>
            <person name="Dugan-Rocha S."/>
            <person name="Dunham A."/>
            <person name="Dunn M."/>
            <person name="Durbin K.J."/>
            <person name="Dutta I."/>
            <person name="Eades T."/>
            <person name="Ellwood M."/>
            <person name="Emery-Cohen A."/>
            <person name="Errington H."/>
            <person name="Evans K.L."/>
            <person name="Faulkner L."/>
            <person name="Francis F."/>
            <person name="Frankland J."/>
            <person name="Fraser A.E."/>
            <person name="Galgoczy P."/>
            <person name="Gilbert J."/>
            <person name="Gill R."/>
            <person name="Gloeckner G."/>
            <person name="Gregory S.G."/>
            <person name="Gribble S."/>
            <person name="Griffiths C."/>
            <person name="Grocock R."/>
            <person name="Gu Y."/>
            <person name="Gwilliam R."/>
            <person name="Hamilton C."/>
            <person name="Hart E.A."/>
            <person name="Hawes A."/>
            <person name="Heath P.D."/>
            <person name="Heitmann K."/>
            <person name="Hennig S."/>
            <person name="Hernandez J."/>
            <person name="Hinzmann B."/>
            <person name="Ho S."/>
            <person name="Hoffs M."/>
            <person name="Howden P.J."/>
            <person name="Huckle E.J."/>
            <person name="Hume J."/>
            <person name="Hunt P.J."/>
            <person name="Hunt A.R."/>
            <person name="Isherwood J."/>
            <person name="Jacob L."/>
            <person name="Johnson D."/>
            <person name="Jones S."/>
            <person name="de Jong P.J."/>
            <person name="Joseph S.S."/>
            <person name="Keenan S."/>
            <person name="Kelly S."/>
            <person name="Kershaw J.K."/>
            <person name="Khan Z."/>
            <person name="Kioschis P."/>
            <person name="Klages S."/>
            <person name="Knights A.J."/>
            <person name="Kosiura A."/>
            <person name="Kovar-Smith C."/>
            <person name="Laird G.K."/>
            <person name="Langford C."/>
            <person name="Lawlor S."/>
            <person name="Leversha M."/>
            <person name="Lewis L."/>
            <person name="Liu W."/>
            <person name="Lloyd C."/>
            <person name="Lloyd D.M."/>
            <person name="Loulseged H."/>
            <person name="Loveland J.E."/>
            <person name="Lovell J.D."/>
            <person name="Lozado R."/>
            <person name="Lu J."/>
            <person name="Lyne R."/>
            <person name="Ma J."/>
            <person name="Maheshwari M."/>
            <person name="Matthews L.H."/>
            <person name="McDowall J."/>
            <person name="McLaren S."/>
            <person name="McMurray A."/>
            <person name="Meidl P."/>
            <person name="Meitinger T."/>
            <person name="Milne S."/>
            <person name="Miner G."/>
            <person name="Mistry S.L."/>
            <person name="Morgan M."/>
            <person name="Morris S."/>
            <person name="Mueller I."/>
            <person name="Mullikin J.C."/>
            <person name="Nguyen N."/>
            <person name="Nordsiek G."/>
            <person name="Nyakatura G."/>
            <person name="O'dell C.N."/>
            <person name="Okwuonu G."/>
            <person name="Palmer S."/>
            <person name="Pandian R."/>
            <person name="Parker D."/>
            <person name="Parrish J."/>
            <person name="Pasternak S."/>
            <person name="Patel D."/>
            <person name="Pearce A.V."/>
            <person name="Pearson D.M."/>
            <person name="Pelan S.E."/>
            <person name="Perez L."/>
            <person name="Porter K.M."/>
            <person name="Ramsey Y."/>
            <person name="Reichwald K."/>
            <person name="Rhodes S."/>
            <person name="Ridler K.A."/>
            <person name="Schlessinger D."/>
            <person name="Schueler M.G."/>
            <person name="Sehra H.K."/>
            <person name="Shaw-Smith C."/>
            <person name="Shen H."/>
            <person name="Sheridan E.M."/>
            <person name="Shownkeen R."/>
            <person name="Skuce C.D."/>
            <person name="Smith M.L."/>
            <person name="Sotheran E.C."/>
            <person name="Steingruber H.E."/>
            <person name="Steward C.A."/>
            <person name="Storey R."/>
            <person name="Swann R.M."/>
            <person name="Swarbreck D."/>
            <person name="Tabor P.E."/>
            <person name="Taudien S."/>
            <person name="Taylor T."/>
            <person name="Teague B."/>
            <person name="Thomas K."/>
            <person name="Thorpe A."/>
            <person name="Timms K."/>
            <person name="Tracey A."/>
            <person name="Trevanion S."/>
            <person name="Tromans A.C."/>
            <person name="d'Urso M."/>
            <person name="Verduzco D."/>
            <person name="Villasana D."/>
            <person name="Waldron L."/>
            <person name="Wall M."/>
            <person name="Wang Q."/>
            <person name="Warren J."/>
            <person name="Warry G.L."/>
            <person name="Wei X."/>
            <person name="West A."/>
            <person name="Whitehead S.L."/>
            <person name="Whiteley M.N."/>
            <person name="Wilkinson J.E."/>
            <person name="Willey D.L."/>
            <person name="Williams G."/>
            <person name="Williams L."/>
            <person name="Williamson A."/>
            <person name="Williamson H."/>
            <person name="Wilming L."/>
            <person name="Woodmansey R.L."/>
            <person name="Wray P.W."/>
            <person name="Yen J."/>
            <person name="Zhang J."/>
            <person name="Zhou J."/>
            <person name="Zoghbi H."/>
            <person name="Zorilla S."/>
            <person name="Buck D."/>
            <person name="Reinhardt R."/>
            <person name="Poustka A."/>
            <person name="Rosenthal A."/>
            <person name="Lehrach H."/>
            <person name="Meindl A."/>
            <person name="Minx P.J."/>
            <person name="Hillier L.W."/>
            <person name="Willard H.F."/>
            <person name="Wilson R.K."/>
            <person name="Waterston R.H."/>
            <person name="Rice C.M."/>
            <person name="Vaudin M."/>
            <person name="Coulson A."/>
            <person name="Nelson D.L."/>
            <person name="Weinstock G."/>
            <person name="Sulston J.E."/>
            <person name="Durbin R.M."/>
            <person name="Hubbard T."/>
            <person name="Gibbs R.A."/>
            <person name="Beck S."/>
            <person name="Rogers J."/>
            <person name="Bentley D.R."/>
        </authorList>
    </citation>
    <scope>NUCLEOTIDE SEQUENCE [LARGE SCALE GENOMIC DNA]</scope>
</reference>
<reference key="2">
    <citation type="journal article" date="2004" name="Genome Res.">
        <title>The status, quality, and expansion of the NIH full-length cDNA project: the Mammalian Gene Collection (MGC).</title>
        <authorList>
            <consortium name="The MGC Project Team"/>
        </authorList>
    </citation>
    <scope>NUCLEOTIDE SEQUENCE [LARGE SCALE MRNA] (ISOFORM 2)</scope>
</reference>
<reference key="3">
    <citation type="journal article" date="2000" name="DNA Res.">
        <title>Prediction of the coding sequences of unidentified human genes. XVII. The complete sequences of 100 new cDNA clones from brain which code for large proteins in vitro.</title>
        <authorList>
            <person name="Nagase T."/>
            <person name="Kikuno R."/>
            <person name="Ishikawa K."/>
            <person name="Hirosawa M."/>
            <person name="Ohara O."/>
        </authorList>
    </citation>
    <scope>NUCLEOTIDE SEQUENCE [LARGE SCALE MRNA] OF 264-765 (ISOFORM 1)</scope>
    <source>
        <tissue>Brain</tissue>
    </source>
</reference>
<reference key="4">
    <citation type="journal article" date="2004" name="Nat. Genet.">
        <title>Complete sequencing and characterization of 21,243 full-length human cDNAs.</title>
        <authorList>
            <person name="Ota T."/>
            <person name="Suzuki Y."/>
            <person name="Nishikawa T."/>
            <person name="Otsuki T."/>
            <person name="Sugiyama T."/>
            <person name="Irie R."/>
            <person name="Wakamatsu A."/>
            <person name="Hayashi K."/>
            <person name="Sato H."/>
            <person name="Nagai K."/>
            <person name="Kimura K."/>
            <person name="Makita H."/>
            <person name="Sekine M."/>
            <person name="Obayashi M."/>
            <person name="Nishi T."/>
            <person name="Shibahara T."/>
            <person name="Tanaka T."/>
            <person name="Ishii S."/>
            <person name="Yamamoto J."/>
            <person name="Saito K."/>
            <person name="Kawai Y."/>
            <person name="Isono Y."/>
            <person name="Nakamura Y."/>
            <person name="Nagahari K."/>
            <person name="Murakami K."/>
            <person name="Yasuda T."/>
            <person name="Iwayanagi T."/>
            <person name="Wagatsuma M."/>
            <person name="Shiratori A."/>
            <person name="Sudo H."/>
            <person name="Hosoiri T."/>
            <person name="Kaku Y."/>
            <person name="Kodaira H."/>
            <person name="Kondo H."/>
            <person name="Sugawara M."/>
            <person name="Takahashi M."/>
            <person name="Kanda K."/>
            <person name="Yokoi T."/>
            <person name="Furuya T."/>
            <person name="Kikkawa E."/>
            <person name="Omura Y."/>
            <person name="Abe K."/>
            <person name="Kamihara K."/>
            <person name="Katsuta N."/>
            <person name="Sato K."/>
            <person name="Tanikawa M."/>
            <person name="Yamazaki M."/>
            <person name="Ninomiya K."/>
            <person name="Ishibashi T."/>
            <person name="Yamashita H."/>
            <person name="Murakawa K."/>
            <person name="Fujimori K."/>
            <person name="Tanai H."/>
            <person name="Kimata M."/>
            <person name="Watanabe M."/>
            <person name="Hiraoka S."/>
            <person name="Chiba Y."/>
            <person name="Ishida S."/>
            <person name="Ono Y."/>
            <person name="Takiguchi S."/>
            <person name="Watanabe S."/>
            <person name="Yosida M."/>
            <person name="Hotuta T."/>
            <person name="Kusano J."/>
            <person name="Kanehori K."/>
            <person name="Takahashi-Fujii A."/>
            <person name="Hara H."/>
            <person name="Tanase T.-O."/>
            <person name="Nomura Y."/>
            <person name="Togiya S."/>
            <person name="Komai F."/>
            <person name="Hara R."/>
            <person name="Takeuchi K."/>
            <person name="Arita M."/>
            <person name="Imose N."/>
            <person name="Musashino K."/>
            <person name="Yuuki H."/>
            <person name="Oshima A."/>
            <person name="Sasaki N."/>
            <person name="Aotsuka S."/>
            <person name="Yoshikawa Y."/>
            <person name="Matsunawa H."/>
            <person name="Ichihara T."/>
            <person name="Shiohata N."/>
            <person name="Sano S."/>
            <person name="Moriya S."/>
            <person name="Momiyama H."/>
            <person name="Satoh N."/>
            <person name="Takami S."/>
            <person name="Terashima Y."/>
            <person name="Suzuki O."/>
            <person name="Nakagawa S."/>
            <person name="Senoh A."/>
            <person name="Mizoguchi H."/>
            <person name="Goto Y."/>
            <person name="Shimizu F."/>
            <person name="Wakebe H."/>
            <person name="Hishigaki H."/>
            <person name="Watanabe T."/>
            <person name="Sugiyama A."/>
            <person name="Takemoto M."/>
            <person name="Kawakami B."/>
            <person name="Yamazaki M."/>
            <person name="Watanabe K."/>
            <person name="Kumagai A."/>
            <person name="Itakura S."/>
            <person name="Fukuzumi Y."/>
            <person name="Fujimori Y."/>
            <person name="Komiyama M."/>
            <person name="Tashiro H."/>
            <person name="Tanigami A."/>
            <person name="Fujiwara T."/>
            <person name="Ono T."/>
            <person name="Yamada K."/>
            <person name="Fujii Y."/>
            <person name="Ozaki K."/>
            <person name="Hirao M."/>
            <person name="Ohmori Y."/>
            <person name="Kawabata A."/>
            <person name="Hikiji T."/>
            <person name="Kobatake N."/>
            <person name="Inagaki H."/>
            <person name="Ikema Y."/>
            <person name="Okamoto S."/>
            <person name="Okitani R."/>
            <person name="Kawakami T."/>
            <person name="Noguchi S."/>
            <person name="Itoh T."/>
            <person name="Shigeta K."/>
            <person name="Senba T."/>
            <person name="Matsumura K."/>
            <person name="Nakajima Y."/>
            <person name="Mizuno T."/>
            <person name="Morinaga M."/>
            <person name="Sasaki M."/>
            <person name="Togashi T."/>
            <person name="Oyama M."/>
            <person name="Hata H."/>
            <person name="Watanabe M."/>
            <person name="Komatsu T."/>
            <person name="Mizushima-Sugano J."/>
            <person name="Satoh T."/>
            <person name="Shirai Y."/>
            <person name="Takahashi Y."/>
            <person name="Nakagawa K."/>
            <person name="Okumura K."/>
            <person name="Nagase T."/>
            <person name="Nomura N."/>
            <person name="Kikuchi H."/>
            <person name="Masuho Y."/>
            <person name="Yamashita R."/>
            <person name="Nakai K."/>
            <person name="Yada T."/>
            <person name="Nakamura Y."/>
            <person name="Ohara O."/>
            <person name="Isogai T."/>
            <person name="Sugano S."/>
        </authorList>
    </citation>
    <scope>NUCLEOTIDE SEQUENCE [LARGE SCALE MRNA] OF 406-765 (ISOFORM 1)</scope>
    <source>
        <tissue>Embryo</tissue>
    </source>
</reference>
<gene>
    <name type="primary">LRCH2</name>
    <name type="synonym">KIAA1495</name>
</gene>
<proteinExistence type="evidence at protein level"/>
<accession>Q5VUJ6</accession>
<accession>F5H2T1</accession>
<accession>Q08AD5</accession>
<accession>Q9HA88</accession>
<accession>Q9P233</accession>
<organism>
    <name type="scientific">Homo sapiens</name>
    <name type="common">Human</name>
    <dbReference type="NCBI Taxonomy" id="9606"/>
    <lineage>
        <taxon>Eukaryota</taxon>
        <taxon>Metazoa</taxon>
        <taxon>Chordata</taxon>
        <taxon>Craniata</taxon>
        <taxon>Vertebrata</taxon>
        <taxon>Euteleostomi</taxon>
        <taxon>Mammalia</taxon>
        <taxon>Eutheria</taxon>
        <taxon>Euarchontoglires</taxon>
        <taxon>Primates</taxon>
        <taxon>Haplorrhini</taxon>
        <taxon>Catarrhini</taxon>
        <taxon>Hominidae</taxon>
        <taxon>Homo</taxon>
    </lineage>
</organism>
<name>LRCH2_HUMAN</name>
<feature type="chain" id="PRO_0000253482" description="Leucine-rich repeat and calponin homology domain-containing protein 2">
    <location>
        <begin position="1"/>
        <end position="765"/>
    </location>
</feature>
<feature type="repeat" description="LRR 1">
    <location>
        <begin position="89"/>
        <end position="110"/>
    </location>
</feature>
<feature type="repeat" description="LRR 2">
    <location>
        <begin position="112"/>
        <end position="133"/>
    </location>
</feature>
<feature type="repeat" description="LRR 3">
    <location>
        <begin position="135"/>
        <end position="156"/>
    </location>
</feature>
<feature type="repeat" description="LRR 4">
    <location>
        <begin position="158"/>
        <end position="179"/>
    </location>
</feature>
<feature type="repeat" description="LRR 5">
    <location>
        <begin position="180"/>
        <end position="201"/>
    </location>
</feature>
<feature type="repeat" description="LRR 6">
    <location>
        <begin position="203"/>
        <end position="224"/>
    </location>
</feature>
<feature type="repeat" description="LRR 7">
    <location>
        <begin position="226"/>
        <end position="248"/>
    </location>
</feature>
<feature type="repeat" description="LRR 8">
    <location>
        <begin position="249"/>
        <end position="269"/>
    </location>
</feature>
<feature type="repeat" description="LRR 9">
    <location>
        <begin position="271"/>
        <end position="292"/>
    </location>
</feature>
<feature type="domain" description="Calponin-homology (CH)" evidence="4">
    <location>
        <begin position="642"/>
        <end position="755"/>
    </location>
</feature>
<feature type="region of interest" description="Disordered" evidence="5">
    <location>
        <begin position="1"/>
        <end position="39"/>
    </location>
</feature>
<feature type="region of interest" description="Disordered" evidence="5">
    <location>
        <begin position="55"/>
        <end position="76"/>
    </location>
</feature>
<feature type="region of interest" description="Disordered" evidence="5">
    <location>
        <begin position="316"/>
        <end position="401"/>
    </location>
</feature>
<feature type="region of interest" description="Disordered" evidence="5">
    <location>
        <begin position="498"/>
        <end position="552"/>
    </location>
</feature>
<feature type="region of interest" description="Disordered" evidence="5">
    <location>
        <begin position="565"/>
        <end position="628"/>
    </location>
</feature>
<feature type="coiled-coil region" evidence="3">
    <location>
        <begin position="438"/>
        <end position="472"/>
    </location>
</feature>
<feature type="compositionally biased region" description="Basic and acidic residues" evidence="5">
    <location>
        <begin position="378"/>
        <end position="388"/>
    </location>
</feature>
<feature type="compositionally biased region" description="Basic and acidic residues" evidence="5">
    <location>
        <begin position="503"/>
        <end position="512"/>
    </location>
</feature>
<feature type="compositionally biased region" description="Polar residues" evidence="5">
    <location>
        <begin position="518"/>
        <end position="529"/>
    </location>
</feature>
<feature type="compositionally biased region" description="Polar residues" evidence="5">
    <location>
        <begin position="584"/>
        <end position="595"/>
    </location>
</feature>
<feature type="splice variant" id="VSP_044969" description="In isoform 2." evidence="6">
    <location>
        <begin position="580"/>
        <end position="596"/>
    </location>
</feature>
<feature type="sequence conflict" description="In Ref. 2; AAI25225." evidence="7" ref="2">
    <original>R</original>
    <variation>K</variation>
    <location>
        <position position="710"/>
    </location>
</feature>
<protein>
    <recommendedName>
        <fullName>Leucine-rich repeat and calponin homology domain-containing protein 2</fullName>
    </recommendedName>
</protein>